<dbReference type="EC" id="2.4.2.21" evidence="1"/>
<dbReference type="EMBL" id="AM408590">
    <property type="protein sequence ID" value="CAL72211.1"/>
    <property type="molecule type" value="Genomic_DNA"/>
</dbReference>
<dbReference type="RefSeq" id="WP_003411429.1">
    <property type="nucleotide sequence ID" value="NC_008769.1"/>
</dbReference>
<dbReference type="SMR" id="A1KKP9"/>
<dbReference type="GeneID" id="45426183"/>
<dbReference type="KEGG" id="mbb:BCG_2223"/>
<dbReference type="HOGENOM" id="CLU_002982_0_2_11"/>
<dbReference type="UniPathway" id="UPA00061">
    <property type="reaction ID" value="UER00516"/>
</dbReference>
<dbReference type="Proteomes" id="UP000001472">
    <property type="component" value="Chromosome"/>
</dbReference>
<dbReference type="GO" id="GO:0008939">
    <property type="term" value="F:nicotinate-nucleotide-dimethylbenzimidazole phosphoribosyltransferase activity"/>
    <property type="evidence" value="ECO:0007669"/>
    <property type="project" value="UniProtKB-UniRule"/>
</dbReference>
<dbReference type="GO" id="GO:0009236">
    <property type="term" value="P:cobalamin biosynthetic process"/>
    <property type="evidence" value="ECO:0007669"/>
    <property type="project" value="UniProtKB-KW"/>
</dbReference>
<dbReference type="CDD" id="cd02439">
    <property type="entry name" value="DMB-PRT_CobT"/>
    <property type="match status" value="1"/>
</dbReference>
<dbReference type="Gene3D" id="1.10.1610.10">
    <property type="match status" value="1"/>
</dbReference>
<dbReference type="Gene3D" id="3.40.50.10210">
    <property type="match status" value="1"/>
</dbReference>
<dbReference type="HAMAP" id="MF_00230">
    <property type="entry name" value="CobT"/>
    <property type="match status" value="1"/>
</dbReference>
<dbReference type="InterPro" id="IPR003200">
    <property type="entry name" value="Nict_dMeBzImd_PRibTrfase"/>
</dbReference>
<dbReference type="InterPro" id="IPR017846">
    <property type="entry name" value="Nict_dMeBzImd_PRibTrfase_bact"/>
</dbReference>
<dbReference type="InterPro" id="IPR023195">
    <property type="entry name" value="Nict_dMeBzImd_PRibTrfase_N"/>
</dbReference>
<dbReference type="InterPro" id="IPR036087">
    <property type="entry name" value="Nict_dMeBzImd_PRibTrfase_sf"/>
</dbReference>
<dbReference type="NCBIfam" id="TIGR03160">
    <property type="entry name" value="cobT_DBIPRT"/>
    <property type="match status" value="1"/>
</dbReference>
<dbReference type="NCBIfam" id="NF000996">
    <property type="entry name" value="PRK00105.1"/>
    <property type="match status" value="1"/>
</dbReference>
<dbReference type="PANTHER" id="PTHR43463">
    <property type="entry name" value="NICOTINATE-NUCLEOTIDE--DIMETHYLBENZIMIDAZOLE PHOSPHORIBOSYLTRANSFERASE"/>
    <property type="match status" value="1"/>
</dbReference>
<dbReference type="PANTHER" id="PTHR43463:SF1">
    <property type="entry name" value="NICOTINATE-NUCLEOTIDE--DIMETHYLBENZIMIDAZOLE PHOSPHORIBOSYLTRANSFERASE"/>
    <property type="match status" value="1"/>
</dbReference>
<dbReference type="Pfam" id="PF02277">
    <property type="entry name" value="DBI_PRT"/>
    <property type="match status" value="1"/>
</dbReference>
<dbReference type="SUPFAM" id="SSF52733">
    <property type="entry name" value="Nicotinate mononucleotide:5,6-dimethylbenzimidazole phosphoribosyltransferase (CobT)"/>
    <property type="match status" value="1"/>
</dbReference>
<gene>
    <name evidence="1" type="primary">cobT</name>
    <name type="ordered locus">BCG_2223</name>
</gene>
<name>COBT_MYCBP</name>
<accession>A1KKP9</accession>
<keyword id="KW-0169">Cobalamin biosynthesis</keyword>
<keyword id="KW-0328">Glycosyltransferase</keyword>
<keyword id="KW-0808">Transferase</keyword>
<sequence>MIGFAPVSTPDAAAEAAARARQDSLTKPRGALGSLEDLSVWVASCQQRCPPRQFERARVVVFAGDHGVARSGVSAYPPEVTAQMVANIDAGGAAINALADVAGATVRVADLAVDADPLSERIGAHKVRRGSGNIATEDALTNDETAAAITAGQQIADEEVDAGADLLIAGDMGIGNTTAAAVLVAALTDAEPVAVVGFGTGIDDAGWARKTAAVRDALFRVRPVLPDPVGLLRCAGGADLAAIAGFCAQAAVRRTPLLLDGVAVTAAALVAERLAPGAHRWWQAGHRSSEPGHGLALAALGLDPIVDLHMRLGEGTGAAVALMVLRAAVAALSSMATFTEAGVSTRSVDGVDRTAPPAVSP</sequence>
<reference key="1">
    <citation type="journal article" date="2007" name="Proc. Natl. Acad. Sci. U.S.A.">
        <title>Genome plasticity of BCG and impact on vaccine efficacy.</title>
        <authorList>
            <person name="Brosch R."/>
            <person name="Gordon S.V."/>
            <person name="Garnier T."/>
            <person name="Eiglmeier K."/>
            <person name="Frigui W."/>
            <person name="Valenti P."/>
            <person name="Dos Santos S."/>
            <person name="Duthoy S."/>
            <person name="Lacroix C."/>
            <person name="Garcia-Pelayo C."/>
            <person name="Inwald J.K."/>
            <person name="Golby P."/>
            <person name="Garcia J.N."/>
            <person name="Hewinson R.G."/>
            <person name="Behr M.A."/>
            <person name="Quail M.A."/>
            <person name="Churcher C."/>
            <person name="Barrell B.G."/>
            <person name="Parkhill J."/>
            <person name="Cole S.T."/>
        </authorList>
    </citation>
    <scope>NUCLEOTIDE SEQUENCE [LARGE SCALE GENOMIC DNA]</scope>
    <source>
        <strain>BCG / Pasteur 1173P2</strain>
    </source>
</reference>
<comment type="function">
    <text evidence="1">Catalyzes the synthesis of alpha-ribazole-5'-phosphate from nicotinate mononucleotide (NAMN) and 5,6-dimethylbenzimidazole (DMB).</text>
</comment>
<comment type="catalytic activity">
    <reaction evidence="1">
        <text>5,6-dimethylbenzimidazole + nicotinate beta-D-ribonucleotide = alpha-ribazole 5'-phosphate + nicotinate + H(+)</text>
        <dbReference type="Rhea" id="RHEA:11196"/>
        <dbReference type="ChEBI" id="CHEBI:15378"/>
        <dbReference type="ChEBI" id="CHEBI:15890"/>
        <dbReference type="ChEBI" id="CHEBI:32544"/>
        <dbReference type="ChEBI" id="CHEBI:57502"/>
        <dbReference type="ChEBI" id="CHEBI:57918"/>
        <dbReference type="EC" id="2.4.2.21"/>
    </reaction>
</comment>
<comment type="pathway">
    <text evidence="1">Nucleoside biosynthesis; alpha-ribazole biosynthesis; alpha-ribazole from 5,6-dimethylbenzimidazole: step 1/2.</text>
</comment>
<comment type="similarity">
    <text evidence="1">Belongs to the CobT family.</text>
</comment>
<evidence type="ECO:0000255" key="1">
    <source>
        <dbReference type="HAMAP-Rule" id="MF_00230"/>
    </source>
</evidence>
<organism>
    <name type="scientific">Mycobacterium bovis (strain BCG / Pasteur 1173P2)</name>
    <dbReference type="NCBI Taxonomy" id="410289"/>
    <lineage>
        <taxon>Bacteria</taxon>
        <taxon>Bacillati</taxon>
        <taxon>Actinomycetota</taxon>
        <taxon>Actinomycetes</taxon>
        <taxon>Mycobacteriales</taxon>
        <taxon>Mycobacteriaceae</taxon>
        <taxon>Mycobacterium</taxon>
        <taxon>Mycobacterium tuberculosis complex</taxon>
    </lineage>
</organism>
<proteinExistence type="inferred from homology"/>
<protein>
    <recommendedName>
        <fullName evidence="1">Nicotinate-nucleotide--dimethylbenzimidazole phosphoribosyltransferase</fullName>
        <shortName evidence="1">NN:DBI PRT</shortName>
        <ecNumber evidence="1">2.4.2.21</ecNumber>
    </recommendedName>
    <alternativeName>
        <fullName evidence="1">N(1)-alpha-phosphoribosyltransferase</fullName>
    </alternativeName>
</protein>
<feature type="chain" id="PRO_1000021603" description="Nicotinate-nucleotide--dimethylbenzimidazole phosphoribosyltransferase">
    <location>
        <begin position="1"/>
        <end position="361"/>
    </location>
</feature>
<feature type="active site" description="Proton acceptor" evidence="1">
    <location>
        <position position="314"/>
    </location>
</feature>